<dbReference type="EMBL" id="AY205108">
    <property type="protein sequence ID" value="AAP30982.1"/>
    <property type="molecule type" value="Genomic_DNA"/>
</dbReference>
<dbReference type="SMR" id="Q864I9"/>
<dbReference type="GlyCosmos" id="Q864I9">
    <property type="glycosylation" value="1 site, No reported glycans"/>
</dbReference>
<dbReference type="GO" id="GO:0005886">
    <property type="term" value="C:plasma membrane"/>
    <property type="evidence" value="ECO:0000250"/>
    <property type="project" value="UniProtKB"/>
</dbReference>
<dbReference type="GO" id="GO:0004980">
    <property type="term" value="F:melanocyte-stimulating hormone receptor activity"/>
    <property type="evidence" value="ECO:0007669"/>
    <property type="project" value="InterPro"/>
</dbReference>
<dbReference type="GO" id="GO:0007189">
    <property type="term" value="P:adenylate cyclase-activating G protein-coupled receptor signaling pathway"/>
    <property type="evidence" value="ECO:0007669"/>
    <property type="project" value="UniProtKB-ARBA"/>
</dbReference>
<dbReference type="CDD" id="cd15351">
    <property type="entry name" value="7tmA_MC1R"/>
    <property type="match status" value="1"/>
</dbReference>
<dbReference type="FunFam" id="1.20.1070.10:FF:000211">
    <property type="entry name" value="Melanocyte-stimulating hormone receptor"/>
    <property type="match status" value="1"/>
</dbReference>
<dbReference type="Gene3D" id="1.20.1070.10">
    <property type="entry name" value="Rhodopsin 7-helix transmembrane proteins"/>
    <property type="match status" value="1"/>
</dbReference>
<dbReference type="InterPro" id="IPR000276">
    <property type="entry name" value="GPCR_Rhodpsn"/>
</dbReference>
<dbReference type="InterPro" id="IPR017452">
    <property type="entry name" value="GPCR_Rhodpsn_7TM"/>
</dbReference>
<dbReference type="InterPro" id="IPR001671">
    <property type="entry name" value="Melcrt_ACTH_rcpt"/>
</dbReference>
<dbReference type="InterPro" id="IPR000761">
    <property type="entry name" value="MSH_rcpt"/>
</dbReference>
<dbReference type="PANTHER" id="PTHR22750">
    <property type="entry name" value="G-PROTEIN COUPLED RECEPTOR"/>
    <property type="match status" value="1"/>
</dbReference>
<dbReference type="Pfam" id="PF00001">
    <property type="entry name" value="7tm_1"/>
    <property type="match status" value="2"/>
</dbReference>
<dbReference type="PRINTS" id="PR00237">
    <property type="entry name" value="GPCRRHODOPSN"/>
</dbReference>
<dbReference type="PRINTS" id="PR00534">
    <property type="entry name" value="MCRFAMILY"/>
</dbReference>
<dbReference type="PRINTS" id="PR00536">
    <property type="entry name" value="MELNOCYTESHR"/>
</dbReference>
<dbReference type="SMART" id="SM01381">
    <property type="entry name" value="7TM_GPCR_Srsx"/>
    <property type="match status" value="1"/>
</dbReference>
<dbReference type="SUPFAM" id="SSF81321">
    <property type="entry name" value="Family A G protein-coupled receptor-like"/>
    <property type="match status" value="1"/>
</dbReference>
<dbReference type="PROSITE" id="PS00237">
    <property type="entry name" value="G_PROTEIN_RECEP_F1_1"/>
    <property type="match status" value="1"/>
</dbReference>
<dbReference type="PROSITE" id="PS50262">
    <property type="entry name" value="G_PROTEIN_RECEP_F1_2"/>
    <property type="match status" value="1"/>
</dbReference>
<keyword id="KW-1003">Cell membrane</keyword>
<keyword id="KW-0297">G-protein coupled receptor</keyword>
<keyword id="KW-0325">Glycoprotein</keyword>
<keyword id="KW-0449">Lipoprotein</keyword>
<keyword id="KW-0472">Membrane</keyword>
<keyword id="KW-0564">Palmitate</keyword>
<keyword id="KW-0675">Receptor</keyword>
<keyword id="KW-0807">Transducer</keyword>
<keyword id="KW-0812">Transmembrane</keyword>
<keyword id="KW-1133">Transmembrane helix</keyword>
<organism>
    <name type="scientific">Presbytis comata</name>
    <name type="common">Grizzled leaf monkey</name>
    <dbReference type="NCBI Taxonomy" id="78452"/>
    <lineage>
        <taxon>Eukaryota</taxon>
        <taxon>Metazoa</taxon>
        <taxon>Chordata</taxon>
        <taxon>Craniata</taxon>
        <taxon>Vertebrata</taxon>
        <taxon>Euteleostomi</taxon>
        <taxon>Mammalia</taxon>
        <taxon>Eutheria</taxon>
        <taxon>Euarchontoglires</taxon>
        <taxon>Primates</taxon>
        <taxon>Haplorrhini</taxon>
        <taxon>Catarrhini</taxon>
        <taxon>Cercopithecidae</taxon>
        <taxon>Colobinae</taxon>
        <taxon>Presbytis</taxon>
    </lineage>
</organism>
<comment type="function">
    <text evidence="1">Receptor for MSH (alpha, beta and gamma) and ACTH. The activity of this receptor is mediated by G proteins which activate adenylate cyclase. Mediates melanogenesis, the production of eumelanin (black/brown) and phaeomelanin (red/yellow), via regulation of cAMP signaling in melanocytes.</text>
</comment>
<comment type="subunit">
    <text evidence="1">Interacts with MGRN1, but does not undergo MGRN1-mediated ubiquitination; this interaction competes with GNAS-binding and thus inhibits agonist-induced cAMP production. Interacts with OPN3; the interaction results in a decrease in MC1R-mediated cAMP signaling and ultimately a decrease in melanin production in melanocytes.</text>
</comment>
<comment type="subcellular location">
    <subcellularLocation>
        <location evidence="1">Cell membrane</location>
        <topology evidence="2">Multi-pass membrane protein</topology>
    </subcellularLocation>
</comment>
<comment type="similarity">
    <text evidence="3">Belongs to the G-protein coupled receptor 1 family.</text>
</comment>
<reference key="1">
    <citation type="journal article" date="2003" name="Am. J. Phys. Anthropol.">
        <title>Evolution of a pigmentation gene, the melanocortin-1 receptor, in primates.</title>
        <authorList>
            <person name="Mundy N.I."/>
            <person name="Kelly J."/>
        </authorList>
    </citation>
    <scope>NUCLEOTIDE SEQUENCE [GENOMIC DNA]</scope>
    <source>
        <strain>Isolate 2</strain>
    </source>
</reference>
<gene>
    <name type="primary">MC1R</name>
</gene>
<sequence>MPVQGSQRRLLGSLNSTPTATPKLGLAANQTGAQCLEVSIPDGLFLSLGLVSLVENVLVVAAIARNRNLHSPMYCFICCLALSDLLVSGSNMLETAVILLLEAGALAARAAVVQQLDNVIDVITCSSMLSSLCFLGAIAMDRYISIFYALRYHSIVTLPRARGVVAAIWVASILFSTLFIAYYDHVAVLLCLVVFFLAMLVLMAVLYVHMLARACQHAQGIAQLHKRQRPAHQGVGLKGAATLTILLGIFFLCWGPFFLHLTLIVLCPQHPTCSCIFKNFNLFLALIICNAIIDPLIYAFRSQELRRTLKKVLLCSW</sequence>
<accession>Q864I9</accession>
<evidence type="ECO:0000250" key="1">
    <source>
        <dbReference type="UniProtKB" id="Q01726"/>
    </source>
</evidence>
<evidence type="ECO:0000255" key="2"/>
<evidence type="ECO:0000255" key="3">
    <source>
        <dbReference type="PROSITE-ProRule" id="PRU00521"/>
    </source>
</evidence>
<name>MSHR_PRECO</name>
<protein>
    <recommendedName>
        <fullName>Melanocyte-stimulating hormone receptor</fullName>
        <shortName>MSH-R</shortName>
    </recommendedName>
    <alternativeName>
        <fullName>Melanocortin receptor 1</fullName>
        <shortName>MC1-R</shortName>
    </alternativeName>
</protein>
<feature type="chain" id="PRO_0000069842" description="Melanocyte-stimulating hormone receptor">
    <location>
        <begin position="1"/>
        <end position="317"/>
    </location>
</feature>
<feature type="topological domain" description="Extracellular" evidence="2">
    <location>
        <begin position="1"/>
        <end position="37"/>
    </location>
</feature>
<feature type="transmembrane region" description="Helical; Name=1" evidence="2">
    <location>
        <begin position="38"/>
        <end position="63"/>
    </location>
</feature>
<feature type="topological domain" description="Cytoplasmic" evidence="2">
    <location>
        <begin position="64"/>
        <end position="72"/>
    </location>
</feature>
<feature type="transmembrane region" description="Helical; Name=2" evidence="2">
    <location>
        <begin position="73"/>
        <end position="93"/>
    </location>
</feature>
<feature type="topological domain" description="Extracellular" evidence="2">
    <location>
        <begin position="94"/>
        <end position="118"/>
    </location>
</feature>
<feature type="transmembrane region" description="Helical; Name=3" evidence="2">
    <location>
        <begin position="119"/>
        <end position="140"/>
    </location>
</feature>
<feature type="topological domain" description="Cytoplasmic" evidence="2">
    <location>
        <begin position="141"/>
        <end position="163"/>
    </location>
</feature>
<feature type="transmembrane region" description="Helical; Name=4" evidence="2">
    <location>
        <begin position="164"/>
        <end position="183"/>
    </location>
</feature>
<feature type="topological domain" description="Extracellular" evidence="2">
    <location>
        <begin position="184"/>
        <end position="191"/>
    </location>
</feature>
<feature type="transmembrane region" description="Helical; Name=5" evidence="2">
    <location>
        <begin position="192"/>
        <end position="211"/>
    </location>
</feature>
<feature type="topological domain" description="Cytoplasmic" evidence="2">
    <location>
        <begin position="212"/>
        <end position="240"/>
    </location>
</feature>
<feature type="transmembrane region" description="Helical; Name=6" evidence="2">
    <location>
        <begin position="241"/>
        <end position="266"/>
    </location>
</feature>
<feature type="topological domain" description="Extracellular" evidence="2">
    <location>
        <begin position="267"/>
        <end position="279"/>
    </location>
</feature>
<feature type="transmembrane region" description="Helical; Name=7" evidence="2">
    <location>
        <begin position="280"/>
        <end position="300"/>
    </location>
</feature>
<feature type="topological domain" description="Cytoplasmic" evidence="2">
    <location>
        <begin position="301"/>
        <end position="317"/>
    </location>
</feature>
<feature type="lipid moiety-binding region" description="S-palmitoyl cysteine" evidence="2">
    <location>
        <position position="315"/>
    </location>
</feature>
<feature type="glycosylation site" description="N-linked (GlcNAc...) asparagine" evidence="2">
    <location>
        <position position="29"/>
    </location>
</feature>
<proteinExistence type="inferred from homology"/>